<reference key="1">
    <citation type="submission" date="2004-07" db="EMBL/GenBank/DDBJ databases">
        <authorList>
            <consortium name="NIH - Xenopus Gene Collection (XGC) project"/>
        </authorList>
    </citation>
    <scope>NUCLEOTIDE SEQUENCE [LARGE SCALE MRNA]</scope>
</reference>
<accession>Q66KU4</accession>
<keyword id="KW-0002">3D-structure</keyword>
<keyword id="KW-0963">Cytoplasm</keyword>
<keyword id="KW-1185">Reference proteome</keyword>
<keyword id="KW-0687">Ribonucleoprotein</keyword>
<keyword id="KW-0689">Ribosomal protein</keyword>
<gene>
    <name type="primary">rpl36</name>
</gene>
<dbReference type="EMBL" id="BC078556">
    <property type="protein sequence ID" value="AAH78556.1"/>
    <property type="molecule type" value="mRNA"/>
</dbReference>
<dbReference type="RefSeq" id="NP_001087323.1">
    <property type="nucleotide sequence ID" value="NM_001093854.2"/>
</dbReference>
<dbReference type="RefSeq" id="XP_018102792.1">
    <property type="nucleotide sequence ID" value="XM_018247303.1"/>
</dbReference>
<dbReference type="RefSeq" id="XP_018102797.1">
    <property type="nucleotide sequence ID" value="XM_018247308.1"/>
</dbReference>
<dbReference type="RefSeq" id="XP_018102806.1">
    <property type="nucleotide sequence ID" value="XM_018247317.1"/>
</dbReference>
<dbReference type="PDB" id="7OYC">
    <property type="method" value="EM"/>
    <property type="resolution" value="2.40 A"/>
    <property type="chains" value="i1=1-105"/>
</dbReference>
<dbReference type="PDBsum" id="7OYC"/>
<dbReference type="EMDB" id="EMD-13113"/>
<dbReference type="SMR" id="Q66KU4"/>
<dbReference type="BioGRID" id="104006">
    <property type="interactions" value="2"/>
</dbReference>
<dbReference type="IntAct" id="Q66KU4">
    <property type="interactions" value="1"/>
</dbReference>
<dbReference type="DNASU" id="447146"/>
<dbReference type="GeneID" id="447146"/>
<dbReference type="KEGG" id="xla:108706795"/>
<dbReference type="KEGG" id="xla:447146"/>
<dbReference type="AGR" id="Xenbase:XB-GENE-969198"/>
<dbReference type="CTD" id="108706795"/>
<dbReference type="CTD" id="447146"/>
<dbReference type="Xenbase" id="XB-GENE-969198">
    <property type="gene designation" value="rpl36.L"/>
</dbReference>
<dbReference type="OrthoDB" id="9616667at2759"/>
<dbReference type="Proteomes" id="UP000186698">
    <property type="component" value="Chromosome 1L"/>
</dbReference>
<dbReference type="Proteomes" id="UP000186698">
    <property type="component" value="Chromosome 1S"/>
</dbReference>
<dbReference type="Bgee" id="108706795">
    <property type="expression patterns" value="Expressed in internal ear and 19 other cell types or tissues"/>
</dbReference>
<dbReference type="GO" id="GO:0022625">
    <property type="term" value="C:cytosolic large ribosomal subunit"/>
    <property type="evidence" value="ECO:0000318"/>
    <property type="project" value="GO_Central"/>
</dbReference>
<dbReference type="GO" id="GO:0003735">
    <property type="term" value="F:structural constituent of ribosome"/>
    <property type="evidence" value="ECO:0000318"/>
    <property type="project" value="GO_Central"/>
</dbReference>
<dbReference type="GO" id="GO:0002181">
    <property type="term" value="P:cytoplasmic translation"/>
    <property type="evidence" value="ECO:0000318"/>
    <property type="project" value="GO_Central"/>
</dbReference>
<dbReference type="FunFam" id="1.10.10.1760:FF:000002">
    <property type="entry name" value="60S ribosomal protein L36"/>
    <property type="match status" value="1"/>
</dbReference>
<dbReference type="Gene3D" id="1.10.10.1760">
    <property type="entry name" value="60S ribosomal protein L36"/>
    <property type="match status" value="1"/>
</dbReference>
<dbReference type="InterPro" id="IPR000509">
    <property type="entry name" value="Ribosomal_eL36"/>
</dbReference>
<dbReference type="InterPro" id="IPR038097">
    <property type="entry name" value="Ribosomal_eL36_sf"/>
</dbReference>
<dbReference type="PANTHER" id="PTHR10114">
    <property type="entry name" value="60S RIBOSOMAL PROTEIN L36"/>
    <property type="match status" value="1"/>
</dbReference>
<dbReference type="Pfam" id="PF01158">
    <property type="entry name" value="Ribosomal_L36e"/>
    <property type="match status" value="1"/>
</dbReference>
<dbReference type="PROSITE" id="PS01190">
    <property type="entry name" value="RIBOSOMAL_L36E"/>
    <property type="match status" value="1"/>
</dbReference>
<comment type="function">
    <text evidence="2">Component of the large ribosomal subunit. The ribosome is a large ribonucleoprotein complex responsible for the synthesis of proteins in the cell.</text>
</comment>
<comment type="subunit">
    <text evidence="2">Component of the large ribosomal subunit.</text>
</comment>
<comment type="subcellular location">
    <subcellularLocation>
        <location evidence="2">Cytoplasm</location>
        <location evidence="2">Cytosol</location>
    </subcellularLocation>
    <subcellularLocation>
        <location evidence="2">Cytoplasm</location>
    </subcellularLocation>
    <text evidence="1 2">Detected on cytosolic polysomes.</text>
</comment>
<comment type="similarity">
    <text evidence="3">Belongs to the eukaryotic ribosomal protein eL36 family.</text>
</comment>
<organism>
    <name type="scientific">Xenopus laevis</name>
    <name type="common">African clawed frog</name>
    <dbReference type="NCBI Taxonomy" id="8355"/>
    <lineage>
        <taxon>Eukaryota</taxon>
        <taxon>Metazoa</taxon>
        <taxon>Chordata</taxon>
        <taxon>Craniata</taxon>
        <taxon>Vertebrata</taxon>
        <taxon>Euteleostomi</taxon>
        <taxon>Amphibia</taxon>
        <taxon>Batrachia</taxon>
        <taxon>Anura</taxon>
        <taxon>Pipoidea</taxon>
        <taxon>Pipidae</taxon>
        <taxon>Xenopodinae</taxon>
        <taxon>Xenopus</taxon>
        <taxon>Xenopus</taxon>
    </lineage>
</organism>
<sequence>MAIRYPMAVGLNKGHRVTKNVTKPRHCRRRGRLTKHTKFVRDMIREVCGFAPYERRAMELLKVSKDKRALKFIKKRIGTHIRAKRKREELSNVLAAMRKAAAKKD</sequence>
<name>RL36_XENLA</name>
<evidence type="ECO:0000250" key="1">
    <source>
        <dbReference type="UniProtKB" id="Q2YGT9"/>
    </source>
</evidence>
<evidence type="ECO:0000250" key="2">
    <source>
        <dbReference type="UniProtKB" id="Q9Y3U8"/>
    </source>
</evidence>
<evidence type="ECO:0000305" key="3"/>
<feature type="chain" id="PRO_0000318983" description="Large ribosomal subunit protein eL36">
    <location>
        <begin position="1"/>
        <end position="105"/>
    </location>
</feature>
<proteinExistence type="evidence at protein level"/>
<protein>
    <recommendedName>
        <fullName evidence="3">Large ribosomal subunit protein eL36</fullName>
    </recommendedName>
    <alternativeName>
        <fullName>60S ribosomal protein L36</fullName>
    </alternativeName>
</protein>